<reference key="1">
    <citation type="journal article" date="2001" name="DNA Res.">
        <title>Complete genome sequence of an aerobic thermoacidophilic Crenarchaeon, Sulfolobus tokodaii strain7.</title>
        <authorList>
            <person name="Kawarabayasi Y."/>
            <person name="Hino Y."/>
            <person name="Horikawa H."/>
            <person name="Jin-no K."/>
            <person name="Takahashi M."/>
            <person name="Sekine M."/>
            <person name="Baba S."/>
            <person name="Ankai A."/>
            <person name="Kosugi H."/>
            <person name="Hosoyama A."/>
            <person name="Fukui S."/>
            <person name="Nagai Y."/>
            <person name="Nishijima K."/>
            <person name="Otsuka R."/>
            <person name="Nakazawa H."/>
            <person name="Takamiya M."/>
            <person name="Kato Y."/>
            <person name="Yoshizawa T."/>
            <person name="Tanaka T."/>
            <person name="Kudoh Y."/>
            <person name="Yamazaki J."/>
            <person name="Kushida N."/>
            <person name="Oguchi A."/>
            <person name="Aoki K."/>
            <person name="Masuda S."/>
            <person name="Yanagii M."/>
            <person name="Nishimura M."/>
            <person name="Yamagishi A."/>
            <person name="Oshima T."/>
            <person name="Kikuchi H."/>
        </authorList>
    </citation>
    <scope>NUCLEOTIDE SEQUENCE [LARGE SCALE GENOMIC DNA]</scope>
    <source>
        <strain>DSM 16993 / JCM 10545 / NBRC 100140 / 7</strain>
    </source>
</reference>
<sequence>MFKEKVGKIILYPVYKFYEKILWNEIKNGPFPQHVGIIPDGNRRWARANNLSINDAYYSGYRKLKQVLLWLLEMGIKNITVFALSTENCDKRSNLELNTIFNYIKAGLEELLYGEIIYKYEVKVRAIGLIYKLPLDLLEVLNQLSKKTENFNKRKLTLAICYGGRQEIIDATKKIIADYEKGKIKLDDINENIFRQYLYDKELEDIDLVIRSSGEIRISNFLLWHIAYSELFFVDTYWPDFRKIDLWRAIRSYQKRKRNFGA</sequence>
<accession>Q976K2</accession>
<accession>F9VMN5</accession>
<keyword id="KW-0460">Magnesium</keyword>
<keyword id="KW-0479">Metal-binding</keyword>
<keyword id="KW-1185">Reference proteome</keyword>
<keyword id="KW-0808">Transferase</keyword>
<name>UPPS_SULTO</name>
<feature type="chain" id="PRO_0000123743" description="Tritrans,polycis-undecaprenyl-diphosphate synthase (geranylgeranyl-diphosphate specific)">
    <location>
        <begin position="1"/>
        <end position="262"/>
    </location>
</feature>
<feature type="active site" evidence="1">
    <location>
        <position position="40"/>
    </location>
</feature>
<feature type="active site" description="Proton acceptor" evidence="1">
    <location>
        <position position="88"/>
    </location>
</feature>
<feature type="binding site" evidence="1">
    <location>
        <position position="40"/>
    </location>
    <ligand>
        <name>Mg(2+)</name>
        <dbReference type="ChEBI" id="CHEBI:18420"/>
    </ligand>
</feature>
<feature type="binding site" evidence="1">
    <location>
        <begin position="41"/>
        <end position="44"/>
    </location>
    <ligand>
        <name>substrate</name>
    </ligand>
</feature>
<feature type="binding site" evidence="1">
    <location>
        <position position="45"/>
    </location>
    <ligand>
        <name>substrate</name>
    </ligand>
</feature>
<feature type="binding site" evidence="1">
    <location>
        <begin position="85"/>
        <end position="87"/>
    </location>
    <ligand>
        <name>substrate</name>
    </ligand>
</feature>
<feature type="binding site" evidence="1">
    <location>
        <position position="92"/>
    </location>
    <ligand>
        <name>substrate</name>
    </ligand>
</feature>
<feature type="binding site" evidence="1">
    <location>
        <position position="211"/>
    </location>
    <ligand>
        <name>substrate</name>
    </ligand>
</feature>
<feature type="binding site" evidence="1">
    <location>
        <begin position="217"/>
        <end position="219"/>
    </location>
    <ligand>
        <name>substrate</name>
    </ligand>
</feature>
<feature type="binding site" evidence="1">
    <location>
        <position position="230"/>
    </location>
    <ligand>
        <name>Mg(2+)</name>
        <dbReference type="ChEBI" id="CHEBI:18420"/>
    </ligand>
</feature>
<protein>
    <recommendedName>
        <fullName evidence="1">Tritrans,polycis-undecaprenyl-diphosphate synthase (geranylgeranyl-diphosphate specific)</fullName>
        <ecNumber evidence="1">2.5.1.89</ecNumber>
    </recommendedName>
    <alternativeName>
        <fullName evidence="1">Undecaprenyl diphosphate synthase</fullName>
        <shortName evidence="1">UDS</shortName>
    </alternativeName>
    <alternativeName>
        <fullName evidence="1">Undecaprenyl pyrophosphate synthase</fullName>
        <shortName evidence="1">UPP synthase</shortName>
    </alternativeName>
</protein>
<evidence type="ECO:0000255" key="1">
    <source>
        <dbReference type="HAMAP-Rule" id="MF_01139"/>
    </source>
</evidence>
<comment type="function">
    <text evidence="1">Catalyzes the sequential condensation of isopentenyl diphosphate (IPP) with geranylgeranyl diphosphate (GGPP) to yield (2Z,6Z,10Z,14Z,18Z,22Z,26Z,30E,34E,38E)-undecaprenyl diphosphate (tritrans,heptacis-UPP). It is probably the precursor of glycosyl carrier lipids.</text>
</comment>
<comment type="catalytic activity">
    <reaction evidence="1">
        <text>geranylgeranyl diphosphate + 7 isopentenyl diphosphate = tri-trans,hepta-cis-undecaprenyl diphosphate + 7 diphosphate</text>
        <dbReference type="Rhea" id="RHEA:27622"/>
        <dbReference type="ChEBI" id="CHEBI:33019"/>
        <dbReference type="ChEBI" id="CHEBI:57533"/>
        <dbReference type="ChEBI" id="CHEBI:60388"/>
        <dbReference type="ChEBI" id="CHEBI:128769"/>
        <dbReference type="EC" id="2.5.1.89"/>
    </reaction>
</comment>
<comment type="cofactor">
    <cofactor evidence="1">
        <name>Mg(2+)</name>
        <dbReference type="ChEBI" id="CHEBI:18420"/>
    </cofactor>
    <text evidence="1">Binds 2 magnesium ions per subunit.</text>
</comment>
<comment type="subunit">
    <text evidence="1">Homodimer.</text>
</comment>
<comment type="similarity">
    <text evidence="1">Belongs to the UPP synthase family.</text>
</comment>
<proteinExistence type="inferred from homology"/>
<gene>
    <name evidence="1" type="primary">uppS</name>
    <name type="ordered locus">STK_01890</name>
</gene>
<organism>
    <name type="scientific">Sulfurisphaera tokodaii (strain DSM 16993 / JCM 10545 / NBRC 100140 / 7)</name>
    <name type="common">Sulfolobus tokodaii</name>
    <dbReference type="NCBI Taxonomy" id="273063"/>
    <lineage>
        <taxon>Archaea</taxon>
        <taxon>Thermoproteota</taxon>
        <taxon>Thermoprotei</taxon>
        <taxon>Sulfolobales</taxon>
        <taxon>Sulfolobaceae</taxon>
        <taxon>Sulfurisphaera</taxon>
    </lineage>
</organism>
<dbReference type="EC" id="2.5.1.89" evidence="1"/>
<dbReference type="EMBL" id="BA000023">
    <property type="protein sequence ID" value="BAK54181.1"/>
    <property type="molecule type" value="Genomic_DNA"/>
</dbReference>
<dbReference type="RefSeq" id="WP_010978127.1">
    <property type="nucleotide sequence ID" value="NC_003106.2"/>
</dbReference>
<dbReference type="SMR" id="Q976K2"/>
<dbReference type="STRING" id="273063.STK_01890"/>
<dbReference type="GeneID" id="1458073"/>
<dbReference type="KEGG" id="sto:STK_01890"/>
<dbReference type="PATRIC" id="fig|273063.9.peg.232"/>
<dbReference type="eggNOG" id="arCOG01532">
    <property type="taxonomic scope" value="Archaea"/>
</dbReference>
<dbReference type="OrthoDB" id="8293at2157"/>
<dbReference type="Proteomes" id="UP000001015">
    <property type="component" value="Chromosome"/>
</dbReference>
<dbReference type="GO" id="GO:0045547">
    <property type="term" value="F:ditrans,polycis-polyprenyl diphosphate synthase [(2E,6E)-farnesyl diphosphate specific] activity"/>
    <property type="evidence" value="ECO:0007669"/>
    <property type="project" value="TreeGrafter"/>
</dbReference>
<dbReference type="GO" id="GO:0000287">
    <property type="term" value="F:magnesium ion binding"/>
    <property type="evidence" value="ECO:0007669"/>
    <property type="project" value="UniProtKB-UniRule"/>
</dbReference>
<dbReference type="GO" id="GO:0016094">
    <property type="term" value="P:polyprenol biosynthetic process"/>
    <property type="evidence" value="ECO:0007669"/>
    <property type="project" value="TreeGrafter"/>
</dbReference>
<dbReference type="CDD" id="cd00475">
    <property type="entry name" value="Cis_IPPS"/>
    <property type="match status" value="1"/>
</dbReference>
<dbReference type="Gene3D" id="3.40.1180.10">
    <property type="entry name" value="Decaprenyl diphosphate synthase-like"/>
    <property type="match status" value="1"/>
</dbReference>
<dbReference type="HAMAP" id="MF_01139">
    <property type="entry name" value="ISPT"/>
    <property type="match status" value="1"/>
</dbReference>
<dbReference type="InterPro" id="IPR001441">
    <property type="entry name" value="UPP_synth-like"/>
</dbReference>
<dbReference type="InterPro" id="IPR018520">
    <property type="entry name" value="UPP_synth-like_CS"/>
</dbReference>
<dbReference type="InterPro" id="IPR036424">
    <property type="entry name" value="UPP_synth-like_sf"/>
</dbReference>
<dbReference type="NCBIfam" id="TIGR00055">
    <property type="entry name" value="uppS"/>
    <property type="match status" value="1"/>
</dbReference>
<dbReference type="PANTHER" id="PTHR10291:SF43">
    <property type="entry name" value="DEHYDRODOLICHYL DIPHOSPHATE SYNTHASE COMPLEX SUBUNIT DHDDS"/>
    <property type="match status" value="1"/>
</dbReference>
<dbReference type="PANTHER" id="PTHR10291">
    <property type="entry name" value="DEHYDRODOLICHYL DIPHOSPHATE SYNTHASE FAMILY MEMBER"/>
    <property type="match status" value="1"/>
</dbReference>
<dbReference type="Pfam" id="PF01255">
    <property type="entry name" value="Prenyltransf"/>
    <property type="match status" value="1"/>
</dbReference>
<dbReference type="SUPFAM" id="SSF64005">
    <property type="entry name" value="Undecaprenyl diphosphate synthase"/>
    <property type="match status" value="1"/>
</dbReference>
<dbReference type="PROSITE" id="PS01066">
    <property type="entry name" value="UPP_SYNTHASE"/>
    <property type="match status" value="1"/>
</dbReference>